<comment type="function">
    <text evidence="1">Transcription regulator that activates transcription by stimulating RNA polymerase (RNAP) recycling in case of stress conditions such as supercoiled DNA or high salt concentrations. Probably acts by releasing the RNAP, when it is trapped or immobilized on tightly supercoiled DNA. Does not activate transcription on linear DNA. Probably not involved in DNA repair.</text>
</comment>
<comment type="subunit">
    <text evidence="1">Interacts with the RNAP. Has a higher affinity for the core RNAP than for the holoenzyme. Its ATPase activity is stimulated by binding to RNAP.</text>
</comment>
<comment type="similarity">
    <text evidence="1">Belongs to the SNF2/RAD54 helicase family. RapA subfamily.</text>
</comment>
<proteinExistence type="inferred from homology"/>
<dbReference type="EC" id="3.6.4.-" evidence="1"/>
<dbReference type="EMBL" id="CP000891">
    <property type="protein sequence ID" value="ABX51076.1"/>
    <property type="molecule type" value="Genomic_DNA"/>
</dbReference>
<dbReference type="RefSeq" id="WP_012197673.1">
    <property type="nucleotide sequence ID" value="NC_009997.1"/>
</dbReference>
<dbReference type="SMR" id="A9L3Y2"/>
<dbReference type="GeneID" id="11773924"/>
<dbReference type="KEGG" id="sbn:Sbal195_3916"/>
<dbReference type="HOGENOM" id="CLU_011520_0_0_6"/>
<dbReference type="Proteomes" id="UP000000770">
    <property type="component" value="Chromosome"/>
</dbReference>
<dbReference type="GO" id="GO:0005524">
    <property type="term" value="F:ATP binding"/>
    <property type="evidence" value="ECO:0007669"/>
    <property type="project" value="UniProtKB-UniRule"/>
</dbReference>
<dbReference type="GO" id="GO:0003677">
    <property type="term" value="F:DNA binding"/>
    <property type="evidence" value="ECO:0007669"/>
    <property type="project" value="UniProtKB-KW"/>
</dbReference>
<dbReference type="GO" id="GO:0004386">
    <property type="term" value="F:helicase activity"/>
    <property type="evidence" value="ECO:0007669"/>
    <property type="project" value="UniProtKB-UniRule"/>
</dbReference>
<dbReference type="GO" id="GO:0016817">
    <property type="term" value="F:hydrolase activity, acting on acid anhydrides"/>
    <property type="evidence" value="ECO:0007669"/>
    <property type="project" value="InterPro"/>
</dbReference>
<dbReference type="GO" id="GO:0006355">
    <property type="term" value="P:regulation of DNA-templated transcription"/>
    <property type="evidence" value="ECO:0007669"/>
    <property type="project" value="UniProtKB-UniRule"/>
</dbReference>
<dbReference type="CDD" id="cd18011">
    <property type="entry name" value="DEXDc_RapA"/>
    <property type="match status" value="1"/>
</dbReference>
<dbReference type="CDD" id="cd18793">
    <property type="entry name" value="SF2_C_SNF"/>
    <property type="match status" value="1"/>
</dbReference>
<dbReference type="Gene3D" id="2.30.30.140">
    <property type="match status" value="1"/>
</dbReference>
<dbReference type="Gene3D" id="2.30.30.930">
    <property type="match status" value="1"/>
</dbReference>
<dbReference type="Gene3D" id="3.30.360.80">
    <property type="match status" value="1"/>
</dbReference>
<dbReference type="Gene3D" id="6.10.140.1500">
    <property type="match status" value="1"/>
</dbReference>
<dbReference type="Gene3D" id="6.10.140.2230">
    <property type="match status" value="1"/>
</dbReference>
<dbReference type="Gene3D" id="3.40.50.300">
    <property type="entry name" value="P-loop containing nucleotide triphosphate hydrolases"/>
    <property type="match status" value="1"/>
</dbReference>
<dbReference type="Gene3D" id="3.40.50.10810">
    <property type="entry name" value="Tandem AAA-ATPase domain"/>
    <property type="match status" value="1"/>
</dbReference>
<dbReference type="HAMAP" id="MF_01821">
    <property type="entry name" value="Helicase_RapA"/>
    <property type="match status" value="1"/>
</dbReference>
<dbReference type="InterPro" id="IPR014001">
    <property type="entry name" value="Helicase_ATP-bd"/>
</dbReference>
<dbReference type="InterPro" id="IPR001650">
    <property type="entry name" value="Helicase_C-like"/>
</dbReference>
<dbReference type="InterPro" id="IPR023949">
    <property type="entry name" value="Helicase_RapA"/>
</dbReference>
<dbReference type="InterPro" id="IPR027417">
    <property type="entry name" value="P-loop_NTPase"/>
</dbReference>
<dbReference type="InterPro" id="IPR022737">
    <property type="entry name" value="RapA_C"/>
</dbReference>
<dbReference type="InterPro" id="IPR038718">
    <property type="entry name" value="SNF2-like_sf"/>
</dbReference>
<dbReference type="InterPro" id="IPR049730">
    <property type="entry name" value="SNF2/RAD54-like_C"/>
</dbReference>
<dbReference type="InterPro" id="IPR000330">
    <property type="entry name" value="SNF2_N"/>
</dbReference>
<dbReference type="InterPro" id="IPR040765">
    <property type="entry name" value="Tudor_1_RapA"/>
</dbReference>
<dbReference type="InterPro" id="IPR040766">
    <property type="entry name" value="Tudor_2_RapA"/>
</dbReference>
<dbReference type="NCBIfam" id="NF003426">
    <property type="entry name" value="PRK04914.1"/>
    <property type="match status" value="1"/>
</dbReference>
<dbReference type="PANTHER" id="PTHR45766">
    <property type="entry name" value="DNA ANNEALING HELICASE AND ENDONUCLEASE ZRANB3 FAMILY MEMBER"/>
    <property type="match status" value="1"/>
</dbReference>
<dbReference type="PANTHER" id="PTHR45766:SF6">
    <property type="entry name" value="SWI_SNF-RELATED MATRIX-ASSOCIATED ACTIN-DEPENDENT REGULATOR OF CHROMATIN SUBFAMILY A-LIKE PROTEIN 1"/>
    <property type="match status" value="1"/>
</dbReference>
<dbReference type="Pfam" id="PF00271">
    <property type="entry name" value="Helicase_C"/>
    <property type="match status" value="1"/>
</dbReference>
<dbReference type="Pfam" id="PF12137">
    <property type="entry name" value="RapA_C"/>
    <property type="match status" value="1"/>
</dbReference>
<dbReference type="Pfam" id="PF00176">
    <property type="entry name" value="SNF2-rel_dom"/>
    <property type="match status" value="1"/>
</dbReference>
<dbReference type="Pfam" id="PF18339">
    <property type="entry name" value="Tudor_1_RapA"/>
    <property type="match status" value="1"/>
</dbReference>
<dbReference type="Pfam" id="PF18337">
    <property type="entry name" value="Tudor_RapA"/>
    <property type="match status" value="1"/>
</dbReference>
<dbReference type="SMART" id="SM00487">
    <property type="entry name" value="DEXDc"/>
    <property type="match status" value="1"/>
</dbReference>
<dbReference type="SMART" id="SM00490">
    <property type="entry name" value="HELICc"/>
    <property type="match status" value="1"/>
</dbReference>
<dbReference type="SUPFAM" id="SSF52540">
    <property type="entry name" value="P-loop containing nucleoside triphosphate hydrolases"/>
    <property type="match status" value="2"/>
</dbReference>
<dbReference type="PROSITE" id="PS51192">
    <property type="entry name" value="HELICASE_ATP_BIND_1"/>
    <property type="match status" value="1"/>
</dbReference>
<dbReference type="PROSITE" id="PS51194">
    <property type="entry name" value="HELICASE_CTER"/>
    <property type="match status" value="1"/>
</dbReference>
<keyword id="KW-0010">Activator</keyword>
<keyword id="KW-0067">ATP-binding</keyword>
<keyword id="KW-0238">DNA-binding</keyword>
<keyword id="KW-0347">Helicase</keyword>
<keyword id="KW-0378">Hydrolase</keyword>
<keyword id="KW-0547">Nucleotide-binding</keyword>
<keyword id="KW-0804">Transcription</keyword>
<keyword id="KW-0805">Transcription regulation</keyword>
<gene>
    <name evidence="1" type="primary">rapA</name>
    <name type="ordered locus">Sbal195_3916</name>
</gene>
<evidence type="ECO:0000255" key="1">
    <source>
        <dbReference type="HAMAP-Rule" id="MF_01821"/>
    </source>
</evidence>
<reference key="1">
    <citation type="submission" date="2007-11" db="EMBL/GenBank/DDBJ databases">
        <title>Complete sequence of chromosome of Shewanella baltica OS195.</title>
        <authorList>
            <consortium name="US DOE Joint Genome Institute"/>
            <person name="Copeland A."/>
            <person name="Lucas S."/>
            <person name="Lapidus A."/>
            <person name="Barry K."/>
            <person name="Glavina del Rio T."/>
            <person name="Dalin E."/>
            <person name="Tice H."/>
            <person name="Pitluck S."/>
            <person name="Chain P."/>
            <person name="Malfatti S."/>
            <person name="Shin M."/>
            <person name="Vergez L."/>
            <person name="Schmutz J."/>
            <person name="Larimer F."/>
            <person name="Land M."/>
            <person name="Hauser L."/>
            <person name="Kyrpides N."/>
            <person name="Kim E."/>
            <person name="Brettar I."/>
            <person name="Rodrigues J."/>
            <person name="Konstantinidis K."/>
            <person name="Klappenbach J."/>
            <person name="Hofle M."/>
            <person name="Tiedje J."/>
            <person name="Richardson P."/>
        </authorList>
    </citation>
    <scope>NUCLEOTIDE SEQUENCE [LARGE SCALE GENOMIC DNA]</scope>
    <source>
        <strain>OS195</strain>
    </source>
</reference>
<accession>A9L3Y2</accession>
<protein>
    <recommendedName>
        <fullName evidence="1">RNA polymerase-associated protein RapA</fullName>
        <ecNumber evidence="1">3.6.4.-</ecNumber>
    </recommendedName>
    <alternativeName>
        <fullName evidence="1">ATP-dependent helicase HepA</fullName>
    </alternativeName>
</protein>
<name>RAPA_SHEB9</name>
<sequence>MPFALGQRWISDTESELGLGTVVQVEGRMVTVLFPATGENRMFSRAEAPLTRVIYNPGDSVESHEGWSLAVSELTEKDGIVIYHGIHSETGEQVTLRETLLNHNIRFNKPQDRLFAGQIDRLDRFGVRYQCQMLRHKLASSDLLGLQGPRVGLIPHQMWIAHEVGRRYAPRVLLADEVGLGKTIEAGLIIHQQLLTGRAERILIIVPDTLRHQWLVEMLRRFNLRFSVFDEDRCVEAYADHDNPFYTEQLVICSLELLRKKKRLDQALDADWDLLVVDEAHHLEWTEEAPSRAYQVVEALSEVIPGVLLLTATPDQLGHESHFARLRLLDPDRFYDYDAFLAEEDSYKDVAIAAEALAGNAKLPDAAINSLTELLGEKDISPSIRLIQADGIDAEVQQAARSELLQELLDRHGTGRVLYRNSRASVKGFPKRFFNAYPHAMPDQYQTAARVSGMMGGHKSLEAKAAQALSPEKLYQEFEDNSASWWKFDPRVDWLIEFLKSHRSKKVLIIASQAETALSLEEALRTREGIQATVFHEGMSIIERDKAGAYFAQEEGGAQALICSEIGSEGRNFQFASHLVLFDLPLNPDLLEQRIGRLDRIGQKNDIQIHLPYLEDTAQERLMQWYHQGLNAFELTCPSGHVLYSEFAEDLLNVLVVDDSDELTNLLNHTQSRYKELKHAMEQGRDKLLEINSHGGEKAMAIVQRLAQNDGDTHLIGSVIRLWDIIGVDQEDKGENSIILRPSEHMMFPTYPGLPEDGVTVTFDRDTALSRDDIALITQEHPLVQTGLDLITGSETGTTSVAILKNKALPAGTLFLELIYMADASAPKSSQLYRYLPPTPIRVLLDKNGNDLSAKVDYASFDKQLSAVNRHIGGKLVTASQPILHPLFAKGEEYAQVVVDEMVAQAREKMTQQLSAELSRLESLKAVNPNIREEELEYLRNQMQELNTYLDASQLQLDAIRMVLVSHV</sequence>
<organism>
    <name type="scientific">Shewanella baltica (strain OS195)</name>
    <dbReference type="NCBI Taxonomy" id="399599"/>
    <lineage>
        <taxon>Bacteria</taxon>
        <taxon>Pseudomonadati</taxon>
        <taxon>Pseudomonadota</taxon>
        <taxon>Gammaproteobacteria</taxon>
        <taxon>Alteromonadales</taxon>
        <taxon>Shewanellaceae</taxon>
        <taxon>Shewanella</taxon>
    </lineage>
</organism>
<feature type="chain" id="PRO_1000088380" description="RNA polymerase-associated protein RapA">
    <location>
        <begin position="1"/>
        <end position="968"/>
    </location>
</feature>
<feature type="domain" description="Helicase ATP-binding" evidence="1">
    <location>
        <begin position="163"/>
        <end position="332"/>
    </location>
</feature>
<feature type="domain" description="Helicase C-terminal" evidence="1">
    <location>
        <begin position="491"/>
        <end position="655"/>
    </location>
</feature>
<feature type="short sequence motif" description="DEAH box">
    <location>
        <begin position="278"/>
        <end position="281"/>
    </location>
</feature>
<feature type="binding site" evidence="1">
    <location>
        <begin position="176"/>
        <end position="183"/>
    </location>
    <ligand>
        <name>ATP</name>
        <dbReference type="ChEBI" id="CHEBI:30616"/>
    </ligand>
</feature>